<organism>
    <name type="scientific">Homo sapiens</name>
    <name type="common">Human</name>
    <dbReference type="NCBI Taxonomy" id="9606"/>
    <lineage>
        <taxon>Eukaryota</taxon>
        <taxon>Metazoa</taxon>
        <taxon>Chordata</taxon>
        <taxon>Craniata</taxon>
        <taxon>Vertebrata</taxon>
        <taxon>Euteleostomi</taxon>
        <taxon>Mammalia</taxon>
        <taxon>Eutheria</taxon>
        <taxon>Euarchontoglires</taxon>
        <taxon>Primates</taxon>
        <taxon>Haplorrhini</taxon>
        <taxon>Catarrhini</taxon>
        <taxon>Hominidae</taxon>
        <taxon>Homo</taxon>
    </lineage>
</organism>
<keyword id="KW-0002">3D-structure</keyword>
<keyword id="KW-0025">Alternative splicing</keyword>
<keyword id="KW-1003">Cell membrane</keyword>
<keyword id="KW-0966">Cell projection</keyword>
<keyword id="KW-0963">Cytoplasm</keyword>
<keyword id="KW-0225">Disease variant</keyword>
<keyword id="KW-0887">Epilepsy</keyword>
<keyword id="KW-0991">Intellectual disability</keyword>
<keyword id="KW-0472">Membrane</keyword>
<keyword id="KW-0493">Microtubule</keyword>
<keyword id="KW-0524">Neurogenesis</keyword>
<keyword id="KW-0539">Nucleus</keyword>
<keyword id="KW-0597">Phosphoprotein</keyword>
<keyword id="KW-1267">Proteomics identification</keyword>
<keyword id="KW-1185">Reference proteome</keyword>
<reference key="1">
    <citation type="journal article" date="1996" name="Proc. Natl. Acad. Sci. U.S.A.">
        <title>Fibroblast growth factor (FGF) homologous factors: new members of the FGF family implicated in nervous system development.</title>
        <authorList>
            <person name="Smallwood P.M."/>
            <person name="Munoz-Sanjuan I."/>
            <person name="Tong P."/>
            <person name="Macke J.P."/>
            <person name="Hendry S.H."/>
            <person name="Gilbert D.J."/>
            <person name="Copeland N.G."/>
            <person name="Jenkins N.A."/>
            <person name="Nathans J."/>
        </authorList>
    </citation>
    <scope>NUCLEOTIDE SEQUENCE [MRNA] (ISOFORM 1)</scope>
    <source>
        <tissue>Retina</tissue>
    </source>
</reference>
<reference key="2">
    <citation type="journal article" date="1999" name="Hum. Genet.">
        <title>Fibroblast growth factor homologous factor 2 (FHF2): gene structure, expression and mapping to the Borjeson-Forssman-Lehmann syndrome region in Xq26 delineated by a duplication breakpoint in a BFLS-like patient.</title>
        <authorList>
            <person name="Gecz J."/>
            <person name="Baker E."/>
            <person name="Donnelly A."/>
            <person name="Ming J.E."/>
            <person name="McDonnald-McGinn D.M."/>
            <person name="Spinner N.B."/>
            <person name="Zackai E.H."/>
            <person name="Sutherland G.R."/>
            <person name="Mulley J.C."/>
        </authorList>
    </citation>
    <scope>NUCLEOTIDE SEQUENCE [MRNA] (ISOFORMS 1 AND 2)</scope>
    <source>
        <tissue>Brain</tissue>
    </source>
</reference>
<reference key="3">
    <citation type="journal article" date="2004" name="Nat. Genet.">
        <title>Complete sequencing and characterization of 21,243 full-length human cDNAs.</title>
        <authorList>
            <person name="Ota T."/>
            <person name="Suzuki Y."/>
            <person name="Nishikawa T."/>
            <person name="Otsuki T."/>
            <person name="Sugiyama T."/>
            <person name="Irie R."/>
            <person name="Wakamatsu A."/>
            <person name="Hayashi K."/>
            <person name="Sato H."/>
            <person name="Nagai K."/>
            <person name="Kimura K."/>
            <person name="Makita H."/>
            <person name="Sekine M."/>
            <person name="Obayashi M."/>
            <person name="Nishi T."/>
            <person name="Shibahara T."/>
            <person name="Tanaka T."/>
            <person name="Ishii S."/>
            <person name="Yamamoto J."/>
            <person name="Saito K."/>
            <person name="Kawai Y."/>
            <person name="Isono Y."/>
            <person name="Nakamura Y."/>
            <person name="Nagahari K."/>
            <person name="Murakami K."/>
            <person name="Yasuda T."/>
            <person name="Iwayanagi T."/>
            <person name="Wagatsuma M."/>
            <person name="Shiratori A."/>
            <person name="Sudo H."/>
            <person name="Hosoiri T."/>
            <person name="Kaku Y."/>
            <person name="Kodaira H."/>
            <person name="Kondo H."/>
            <person name="Sugawara M."/>
            <person name="Takahashi M."/>
            <person name="Kanda K."/>
            <person name="Yokoi T."/>
            <person name="Furuya T."/>
            <person name="Kikkawa E."/>
            <person name="Omura Y."/>
            <person name="Abe K."/>
            <person name="Kamihara K."/>
            <person name="Katsuta N."/>
            <person name="Sato K."/>
            <person name="Tanikawa M."/>
            <person name="Yamazaki M."/>
            <person name="Ninomiya K."/>
            <person name="Ishibashi T."/>
            <person name="Yamashita H."/>
            <person name="Murakawa K."/>
            <person name="Fujimori K."/>
            <person name="Tanai H."/>
            <person name="Kimata M."/>
            <person name="Watanabe M."/>
            <person name="Hiraoka S."/>
            <person name="Chiba Y."/>
            <person name="Ishida S."/>
            <person name="Ono Y."/>
            <person name="Takiguchi S."/>
            <person name="Watanabe S."/>
            <person name="Yosida M."/>
            <person name="Hotuta T."/>
            <person name="Kusano J."/>
            <person name="Kanehori K."/>
            <person name="Takahashi-Fujii A."/>
            <person name="Hara H."/>
            <person name="Tanase T.-O."/>
            <person name="Nomura Y."/>
            <person name="Togiya S."/>
            <person name="Komai F."/>
            <person name="Hara R."/>
            <person name="Takeuchi K."/>
            <person name="Arita M."/>
            <person name="Imose N."/>
            <person name="Musashino K."/>
            <person name="Yuuki H."/>
            <person name="Oshima A."/>
            <person name="Sasaki N."/>
            <person name="Aotsuka S."/>
            <person name="Yoshikawa Y."/>
            <person name="Matsunawa H."/>
            <person name="Ichihara T."/>
            <person name="Shiohata N."/>
            <person name="Sano S."/>
            <person name="Moriya S."/>
            <person name="Momiyama H."/>
            <person name="Satoh N."/>
            <person name="Takami S."/>
            <person name="Terashima Y."/>
            <person name="Suzuki O."/>
            <person name="Nakagawa S."/>
            <person name="Senoh A."/>
            <person name="Mizoguchi H."/>
            <person name="Goto Y."/>
            <person name="Shimizu F."/>
            <person name="Wakebe H."/>
            <person name="Hishigaki H."/>
            <person name="Watanabe T."/>
            <person name="Sugiyama A."/>
            <person name="Takemoto M."/>
            <person name="Kawakami B."/>
            <person name="Yamazaki M."/>
            <person name="Watanabe K."/>
            <person name="Kumagai A."/>
            <person name="Itakura S."/>
            <person name="Fukuzumi Y."/>
            <person name="Fujimori Y."/>
            <person name="Komiyama M."/>
            <person name="Tashiro H."/>
            <person name="Tanigami A."/>
            <person name="Fujiwara T."/>
            <person name="Ono T."/>
            <person name="Yamada K."/>
            <person name="Fujii Y."/>
            <person name="Ozaki K."/>
            <person name="Hirao M."/>
            <person name="Ohmori Y."/>
            <person name="Kawabata A."/>
            <person name="Hikiji T."/>
            <person name="Kobatake N."/>
            <person name="Inagaki H."/>
            <person name="Ikema Y."/>
            <person name="Okamoto S."/>
            <person name="Okitani R."/>
            <person name="Kawakami T."/>
            <person name="Noguchi S."/>
            <person name="Itoh T."/>
            <person name="Shigeta K."/>
            <person name="Senba T."/>
            <person name="Matsumura K."/>
            <person name="Nakajima Y."/>
            <person name="Mizuno T."/>
            <person name="Morinaga M."/>
            <person name="Sasaki M."/>
            <person name="Togashi T."/>
            <person name="Oyama M."/>
            <person name="Hata H."/>
            <person name="Watanabe M."/>
            <person name="Komatsu T."/>
            <person name="Mizushima-Sugano J."/>
            <person name="Satoh T."/>
            <person name="Shirai Y."/>
            <person name="Takahashi Y."/>
            <person name="Nakagawa K."/>
            <person name="Okumura K."/>
            <person name="Nagase T."/>
            <person name="Nomura N."/>
            <person name="Kikuchi H."/>
            <person name="Masuho Y."/>
            <person name="Yamashita R."/>
            <person name="Nakai K."/>
            <person name="Yada T."/>
            <person name="Nakamura Y."/>
            <person name="Ohara O."/>
            <person name="Isogai T."/>
            <person name="Sugano S."/>
        </authorList>
    </citation>
    <scope>NUCLEOTIDE SEQUENCE [LARGE SCALE MRNA] (ISOFORMS 3 AND 4)</scope>
    <source>
        <tissue>Brain</tissue>
        <tissue>Kidney</tissue>
    </source>
</reference>
<reference key="4">
    <citation type="submission" date="2004-06" db="EMBL/GenBank/DDBJ databases">
        <authorList>
            <consortium name="NIEHS SNPs program"/>
        </authorList>
    </citation>
    <scope>NUCLEOTIDE SEQUENCE [GENOMIC DNA]</scope>
    <scope>VARIANT GLN-197</scope>
</reference>
<reference key="5">
    <citation type="journal article" date="2005" name="Nature">
        <title>The DNA sequence of the human X chromosome.</title>
        <authorList>
            <person name="Ross M.T."/>
            <person name="Grafham D.V."/>
            <person name="Coffey A.J."/>
            <person name="Scherer S."/>
            <person name="McLay K."/>
            <person name="Muzny D."/>
            <person name="Platzer M."/>
            <person name="Howell G.R."/>
            <person name="Burrows C."/>
            <person name="Bird C.P."/>
            <person name="Frankish A."/>
            <person name="Lovell F.L."/>
            <person name="Howe K.L."/>
            <person name="Ashurst J.L."/>
            <person name="Fulton R.S."/>
            <person name="Sudbrak R."/>
            <person name="Wen G."/>
            <person name="Jones M.C."/>
            <person name="Hurles M.E."/>
            <person name="Andrews T.D."/>
            <person name="Scott C.E."/>
            <person name="Searle S."/>
            <person name="Ramser J."/>
            <person name="Whittaker A."/>
            <person name="Deadman R."/>
            <person name="Carter N.P."/>
            <person name="Hunt S.E."/>
            <person name="Chen R."/>
            <person name="Cree A."/>
            <person name="Gunaratne P."/>
            <person name="Havlak P."/>
            <person name="Hodgson A."/>
            <person name="Metzker M.L."/>
            <person name="Richards S."/>
            <person name="Scott G."/>
            <person name="Steffen D."/>
            <person name="Sodergren E."/>
            <person name="Wheeler D.A."/>
            <person name="Worley K.C."/>
            <person name="Ainscough R."/>
            <person name="Ambrose K.D."/>
            <person name="Ansari-Lari M.A."/>
            <person name="Aradhya S."/>
            <person name="Ashwell R.I."/>
            <person name="Babbage A.K."/>
            <person name="Bagguley C.L."/>
            <person name="Ballabio A."/>
            <person name="Banerjee R."/>
            <person name="Barker G.E."/>
            <person name="Barlow K.F."/>
            <person name="Barrett I.P."/>
            <person name="Bates K.N."/>
            <person name="Beare D.M."/>
            <person name="Beasley H."/>
            <person name="Beasley O."/>
            <person name="Beck A."/>
            <person name="Bethel G."/>
            <person name="Blechschmidt K."/>
            <person name="Brady N."/>
            <person name="Bray-Allen S."/>
            <person name="Bridgeman A.M."/>
            <person name="Brown A.J."/>
            <person name="Brown M.J."/>
            <person name="Bonnin D."/>
            <person name="Bruford E.A."/>
            <person name="Buhay C."/>
            <person name="Burch P."/>
            <person name="Burford D."/>
            <person name="Burgess J."/>
            <person name="Burrill W."/>
            <person name="Burton J."/>
            <person name="Bye J.M."/>
            <person name="Carder C."/>
            <person name="Carrel L."/>
            <person name="Chako J."/>
            <person name="Chapman J.C."/>
            <person name="Chavez D."/>
            <person name="Chen E."/>
            <person name="Chen G."/>
            <person name="Chen Y."/>
            <person name="Chen Z."/>
            <person name="Chinault C."/>
            <person name="Ciccodicola A."/>
            <person name="Clark S.Y."/>
            <person name="Clarke G."/>
            <person name="Clee C.M."/>
            <person name="Clegg S."/>
            <person name="Clerc-Blankenburg K."/>
            <person name="Clifford K."/>
            <person name="Cobley V."/>
            <person name="Cole C.G."/>
            <person name="Conquer J.S."/>
            <person name="Corby N."/>
            <person name="Connor R.E."/>
            <person name="David R."/>
            <person name="Davies J."/>
            <person name="Davis C."/>
            <person name="Davis J."/>
            <person name="Delgado O."/>
            <person name="Deshazo D."/>
            <person name="Dhami P."/>
            <person name="Ding Y."/>
            <person name="Dinh H."/>
            <person name="Dodsworth S."/>
            <person name="Draper H."/>
            <person name="Dugan-Rocha S."/>
            <person name="Dunham A."/>
            <person name="Dunn M."/>
            <person name="Durbin K.J."/>
            <person name="Dutta I."/>
            <person name="Eades T."/>
            <person name="Ellwood M."/>
            <person name="Emery-Cohen A."/>
            <person name="Errington H."/>
            <person name="Evans K.L."/>
            <person name="Faulkner L."/>
            <person name="Francis F."/>
            <person name="Frankland J."/>
            <person name="Fraser A.E."/>
            <person name="Galgoczy P."/>
            <person name="Gilbert J."/>
            <person name="Gill R."/>
            <person name="Gloeckner G."/>
            <person name="Gregory S.G."/>
            <person name="Gribble S."/>
            <person name="Griffiths C."/>
            <person name="Grocock R."/>
            <person name="Gu Y."/>
            <person name="Gwilliam R."/>
            <person name="Hamilton C."/>
            <person name="Hart E.A."/>
            <person name="Hawes A."/>
            <person name="Heath P.D."/>
            <person name="Heitmann K."/>
            <person name="Hennig S."/>
            <person name="Hernandez J."/>
            <person name="Hinzmann B."/>
            <person name="Ho S."/>
            <person name="Hoffs M."/>
            <person name="Howden P.J."/>
            <person name="Huckle E.J."/>
            <person name="Hume J."/>
            <person name="Hunt P.J."/>
            <person name="Hunt A.R."/>
            <person name="Isherwood J."/>
            <person name="Jacob L."/>
            <person name="Johnson D."/>
            <person name="Jones S."/>
            <person name="de Jong P.J."/>
            <person name="Joseph S.S."/>
            <person name="Keenan S."/>
            <person name="Kelly S."/>
            <person name="Kershaw J.K."/>
            <person name="Khan Z."/>
            <person name="Kioschis P."/>
            <person name="Klages S."/>
            <person name="Knights A.J."/>
            <person name="Kosiura A."/>
            <person name="Kovar-Smith C."/>
            <person name="Laird G.K."/>
            <person name="Langford C."/>
            <person name="Lawlor S."/>
            <person name="Leversha M."/>
            <person name="Lewis L."/>
            <person name="Liu W."/>
            <person name="Lloyd C."/>
            <person name="Lloyd D.M."/>
            <person name="Loulseged H."/>
            <person name="Loveland J.E."/>
            <person name="Lovell J.D."/>
            <person name="Lozado R."/>
            <person name="Lu J."/>
            <person name="Lyne R."/>
            <person name="Ma J."/>
            <person name="Maheshwari M."/>
            <person name="Matthews L.H."/>
            <person name="McDowall J."/>
            <person name="McLaren S."/>
            <person name="McMurray A."/>
            <person name="Meidl P."/>
            <person name="Meitinger T."/>
            <person name="Milne S."/>
            <person name="Miner G."/>
            <person name="Mistry S.L."/>
            <person name="Morgan M."/>
            <person name="Morris S."/>
            <person name="Mueller I."/>
            <person name="Mullikin J.C."/>
            <person name="Nguyen N."/>
            <person name="Nordsiek G."/>
            <person name="Nyakatura G."/>
            <person name="O'dell C.N."/>
            <person name="Okwuonu G."/>
            <person name="Palmer S."/>
            <person name="Pandian R."/>
            <person name="Parker D."/>
            <person name="Parrish J."/>
            <person name="Pasternak S."/>
            <person name="Patel D."/>
            <person name="Pearce A.V."/>
            <person name="Pearson D.M."/>
            <person name="Pelan S.E."/>
            <person name="Perez L."/>
            <person name="Porter K.M."/>
            <person name="Ramsey Y."/>
            <person name="Reichwald K."/>
            <person name="Rhodes S."/>
            <person name="Ridler K.A."/>
            <person name="Schlessinger D."/>
            <person name="Schueler M.G."/>
            <person name="Sehra H.K."/>
            <person name="Shaw-Smith C."/>
            <person name="Shen H."/>
            <person name="Sheridan E.M."/>
            <person name="Shownkeen R."/>
            <person name="Skuce C.D."/>
            <person name="Smith M.L."/>
            <person name="Sotheran E.C."/>
            <person name="Steingruber H.E."/>
            <person name="Steward C.A."/>
            <person name="Storey R."/>
            <person name="Swann R.M."/>
            <person name="Swarbreck D."/>
            <person name="Tabor P.E."/>
            <person name="Taudien S."/>
            <person name="Taylor T."/>
            <person name="Teague B."/>
            <person name="Thomas K."/>
            <person name="Thorpe A."/>
            <person name="Timms K."/>
            <person name="Tracey A."/>
            <person name="Trevanion S."/>
            <person name="Tromans A.C."/>
            <person name="d'Urso M."/>
            <person name="Verduzco D."/>
            <person name="Villasana D."/>
            <person name="Waldron L."/>
            <person name="Wall M."/>
            <person name="Wang Q."/>
            <person name="Warren J."/>
            <person name="Warry G.L."/>
            <person name="Wei X."/>
            <person name="West A."/>
            <person name="Whitehead S.L."/>
            <person name="Whiteley M.N."/>
            <person name="Wilkinson J.E."/>
            <person name="Willey D.L."/>
            <person name="Williams G."/>
            <person name="Williams L."/>
            <person name="Williamson A."/>
            <person name="Williamson H."/>
            <person name="Wilming L."/>
            <person name="Woodmansey R.L."/>
            <person name="Wray P.W."/>
            <person name="Yen J."/>
            <person name="Zhang J."/>
            <person name="Zhou J."/>
            <person name="Zoghbi H."/>
            <person name="Zorilla S."/>
            <person name="Buck D."/>
            <person name="Reinhardt R."/>
            <person name="Poustka A."/>
            <person name="Rosenthal A."/>
            <person name="Lehrach H."/>
            <person name="Meindl A."/>
            <person name="Minx P.J."/>
            <person name="Hillier L.W."/>
            <person name="Willard H.F."/>
            <person name="Wilson R.K."/>
            <person name="Waterston R.H."/>
            <person name="Rice C.M."/>
            <person name="Vaudin M."/>
            <person name="Coulson A."/>
            <person name="Nelson D.L."/>
            <person name="Weinstock G."/>
            <person name="Sulston J.E."/>
            <person name="Durbin R.M."/>
            <person name="Hubbard T."/>
            <person name="Gibbs R.A."/>
            <person name="Beck S."/>
            <person name="Rogers J."/>
            <person name="Bentley D.R."/>
        </authorList>
    </citation>
    <scope>NUCLEOTIDE SEQUENCE [LARGE SCALE GENOMIC DNA]</scope>
</reference>
<reference key="6">
    <citation type="submission" date="2005-09" db="EMBL/GenBank/DDBJ databases">
        <authorList>
            <person name="Mural R.J."/>
            <person name="Istrail S."/>
            <person name="Sutton G.G."/>
            <person name="Florea L."/>
            <person name="Halpern A.L."/>
            <person name="Mobarry C.M."/>
            <person name="Lippert R."/>
            <person name="Walenz B."/>
            <person name="Shatkay H."/>
            <person name="Dew I."/>
            <person name="Miller J.R."/>
            <person name="Flanigan M.J."/>
            <person name="Edwards N.J."/>
            <person name="Bolanos R."/>
            <person name="Fasulo D."/>
            <person name="Halldorsson B.V."/>
            <person name="Hannenhalli S."/>
            <person name="Turner R."/>
            <person name="Yooseph S."/>
            <person name="Lu F."/>
            <person name="Nusskern D.R."/>
            <person name="Shue B.C."/>
            <person name="Zheng X.H."/>
            <person name="Zhong F."/>
            <person name="Delcher A.L."/>
            <person name="Huson D.H."/>
            <person name="Kravitz S.A."/>
            <person name="Mouchard L."/>
            <person name="Reinert K."/>
            <person name="Remington K.A."/>
            <person name="Clark A.G."/>
            <person name="Waterman M.S."/>
            <person name="Eichler E.E."/>
            <person name="Adams M.D."/>
            <person name="Hunkapiller M.W."/>
            <person name="Myers E.W."/>
            <person name="Venter J.C."/>
        </authorList>
    </citation>
    <scope>NUCLEOTIDE SEQUENCE [LARGE SCALE GENOMIC DNA]</scope>
</reference>
<reference key="7">
    <citation type="journal article" date="2004" name="Genome Res.">
        <title>The status, quality, and expansion of the NIH full-length cDNA project: the Mammalian Gene Collection (MGC).</title>
        <authorList>
            <consortium name="The MGC Project Team"/>
        </authorList>
    </citation>
    <scope>NUCLEOTIDE SEQUENCE [LARGE SCALE MRNA] (ISOFORM 1)</scope>
    <source>
        <tissue>Lung</tissue>
        <tissue>Skin</tissue>
    </source>
</reference>
<reference key="8">
    <citation type="journal article" date="2000" name="J. Biol. Chem.">
        <title>Isoform diversity among fibroblast growth factor homologous factors is generated by alternative promoter usage and differential splicing.</title>
        <authorList>
            <person name="Munoz-Sanjuan I."/>
            <person name="Smallwood P.M."/>
            <person name="Nathans J."/>
        </authorList>
    </citation>
    <scope>PARTIAL NUCLEOTIDE SEQUENCE [MRNA] (ISOFORMS 4 AND 5)</scope>
    <scope>ALTERNATIVE SPLICING</scope>
    <scope>SUBCELLULAR LOCATION</scope>
</reference>
<reference key="9">
    <citation type="journal article" date="1997" name="Mech. Dev.">
        <title>Murine FGF-12 and FGF-13: expression in embryonic nervous system, connective tissue and heart.</title>
        <authorList>
            <person name="Hartung H."/>
            <person name="Feldman B."/>
            <person name="Lovec H."/>
            <person name="Coulier F."/>
            <person name="Birnbaum D."/>
            <person name="Goldfarb M."/>
        </authorList>
    </citation>
    <scope>TISSUE SPECIFICITY</scope>
</reference>
<reference key="10">
    <citation type="journal article" date="2001" name="Curr. Biol.">
        <title>Fibroblast growth factor homologous factors are intracellular signaling proteins.</title>
        <authorList>
            <person name="Schoorlemmer J."/>
            <person name="Goldfarb M."/>
        </authorList>
    </citation>
    <scope>INTERACTION WITH MAPK8IP2</scope>
</reference>
<reference key="11">
    <citation type="journal article" date="2004" name="J. Neurosci.">
        <title>Fibroblast growth factor homologous factor 2B: association with Nav1.6 and selective colocalization at nodes of Ranvier of dorsal root axons.</title>
        <authorList>
            <person name="Wittmack E.K."/>
            <person name="Rush A.M."/>
            <person name="Craner M.J."/>
            <person name="Goldfarb M."/>
            <person name="Waxman S.G."/>
            <person name="Dib-Hajj S.D."/>
        </authorList>
    </citation>
    <scope>FUNCTION IN SCN8A REGULATION</scope>
    <scope>INTERACTION WITH SCN8A</scope>
</reference>
<reference key="12">
    <citation type="journal article" date="2011" name="Circ. Res.">
        <title>Fibroblast growth factor homologous factor 13 regulates Na+ channels and conduction velocity in murine hearts.</title>
        <authorList>
            <person name="Wang C."/>
            <person name="Hennessey J.A."/>
            <person name="Kirkton R.D."/>
            <person name="Wang C."/>
            <person name="Graham V."/>
            <person name="Puranam R.S."/>
            <person name="Rosenberg P.B."/>
            <person name="Bursac N."/>
            <person name="Pitt G.S."/>
        </authorList>
    </citation>
    <scope>INTERACTION WITH SCN5A</scope>
</reference>
<reference key="13">
    <citation type="journal article" date="2011" name="J. Biol. Chem.">
        <title>Identification of novel interaction sites that determine specificity between fibroblast growth factor homologous factors and voltage-gated sodium channels.</title>
        <authorList>
            <person name="Wang C."/>
            <person name="Wang C."/>
            <person name="Hoch E.G."/>
            <person name="Pitt G.S."/>
        </authorList>
    </citation>
    <scope>INTERACTION WITH SCN1A; SCN2A; SCN5A AND SCN8A</scope>
    <scope>MUTAGENESIS OF PRO-207</scope>
</reference>
<reference key="14">
    <citation type="journal article" date="2013" name="J. Proteome Res.">
        <title>Toward a comprehensive characterization of a human cancer cell phosphoproteome.</title>
        <authorList>
            <person name="Zhou H."/>
            <person name="Di Palma S."/>
            <person name="Preisinger C."/>
            <person name="Peng M."/>
            <person name="Polat A.N."/>
            <person name="Heck A.J."/>
            <person name="Mohammed S."/>
        </authorList>
    </citation>
    <scope>PHOSPHORYLATION [LARGE SCALE ANALYSIS] AT SER-208</scope>
    <scope>IDENTIFICATION BY MASS SPECTROMETRY [LARGE SCALE ANALYSIS]</scope>
    <source>
        <tissue>Erythroleukemia</tissue>
    </source>
</reference>
<reference key="15">
    <citation type="journal article" date="2023" name="Proc. Natl. Acad. Sci. U.S.A.">
        <title>Cryo-EM structure of human voltage-gated sodium channel Nav1.6.</title>
        <authorList>
            <person name="Fan X."/>
            <person name="Huang J."/>
            <person name="Jin X."/>
            <person name="Yan N."/>
        </authorList>
    </citation>
    <scope>FUNCTION</scope>
</reference>
<reference key="16">
    <citation type="journal article" date="2021" name="Elife">
        <title>5'-UTR SNP of FGF13 causes translational defect and intellectual disability.</title>
        <authorList>
            <person name="Pan X."/>
            <person name="Zhao J."/>
            <person name="Zhou Z."/>
            <person name="Chen J."/>
            <person name="Yang Z."/>
            <person name="Wu Y."/>
            <person name="Bai M."/>
            <person name="Jiao Y."/>
            <person name="Yang Y."/>
            <person name="Hu X."/>
            <person name="Cheng T."/>
            <person name="Lu Q."/>
            <person name="Wang B."/>
            <person name="Li C.L."/>
            <person name="Lu Y.J."/>
            <person name="Diao L."/>
            <person name="Zhong Y.Q."/>
            <person name="Pan J."/>
            <person name="Zhu J."/>
            <person name="Xiao H.S."/>
            <person name="Qiu Z.L."/>
            <person name="Li J."/>
            <person name="Wang Z."/>
            <person name="Hui J."/>
            <person name="Bao L."/>
            <person name="Zhang X."/>
        </authorList>
    </citation>
    <scope>INVOLVEMENT IN XLID110</scope>
</reference>
<reference key="17">
    <citation type="journal article" date="2009" name="J. Biol. Chem.">
        <title>Crystal structure of a fibroblast growth factor homologous factor (FHF) defines a conserved surface on FHFs for binding and modulation of voltage-gated sodium channels.</title>
        <authorList>
            <person name="Goetz R."/>
            <person name="Dover K."/>
            <person name="Laezza F."/>
            <person name="Shtraizent N."/>
            <person name="Huang X."/>
            <person name="Tchetchik D."/>
            <person name="Eliseenkova A.V."/>
            <person name="Xu C.F."/>
            <person name="Neubert T.A."/>
            <person name="Ornitz D.M."/>
            <person name="Goldfarb M."/>
            <person name="Mohammadi M."/>
        </authorList>
    </citation>
    <scope>X-RAY CRYSTALLOGRAPHY (1.9 ANGSTROMS) OF 53-245</scope>
    <scope>INTERACTION WITH SCN1A; SCN11A; SCN2A AND SCN5A</scope>
</reference>
<reference key="18">
    <citation type="journal article" date="2021" name="Am. J. Hum. Genet.">
        <title>Missense variants in the N-terminal domain of the A isoform of FHF2/FGF13 cause an X-linked developmental and epileptic encephalopathy.</title>
        <authorList>
            <consortium name="Genomics England Research Consortium"/>
            <person name="Fry A.E."/>
            <person name="Marra C."/>
            <person name="Derrick A.V."/>
            <person name="Pickrell W.O."/>
            <person name="Higgins A.T."/>
            <person name="Te Water Naude J."/>
            <person name="McClatchey M.A."/>
            <person name="Davies S.J."/>
            <person name="Metcalfe K.A."/>
            <person name="Tan H.J."/>
            <person name="Mohanraj R."/>
            <person name="Avula S."/>
            <person name="Williams D."/>
            <person name="Brady L.I."/>
            <person name="Mesterman R."/>
            <person name="Tarnopolsky M.A."/>
            <person name="Zhang Y."/>
            <person name="Yang Y."/>
            <person name="Wang X."/>
            <person name="Rees M.I."/>
            <person name="Goldfarb M."/>
            <person name="Chung S.K."/>
        </authorList>
    </citation>
    <scope>VARIANTS DEE90 CYS-11; PRO-11 AND THR-14</scope>
    <scope>CHARACTERIZATION OF VARIANTS DEE90 CYS-11 AND THR-14</scope>
    <scope>INVOLVEMENT IN DEE90</scope>
    <scope>FUNCTION</scope>
    <scope>INTERACTION WITH SCN8A</scope>
</reference>
<reference key="19">
    <citation type="journal article" date="2022" name="Eur. J. Med. Genet.">
        <title>Further evidence of affected females with a heterozygous variant in FGF13 causing X-linked developmental and epileptic encephalopathy 90.</title>
        <authorList>
            <person name="Narayanan D.L."/>
            <person name="Majethia P."/>
            <person name="Shrikiran A."/>
            <person name="Siddiqui S."/>
            <person name="Dalal A."/>
            <person name="Shukla A."/>
        </authorList>
    </citation>
    <scope>VARIANT DEE90 SER-5</scope>
</reference>
<feature type="chain" id="PRO_0000147607" description="Fibroblast growth factor 13">
    <location>
        <begin position="1"/>
        <end position="245"/>
    </location>
</feature>
<feature type="region of interest" description="Mediates targeting to the nucleus" evidence="1">
    <location>
        <begin position="1"/>
        <end position="62"/>
    </location>
</feature>
<feature type="region of interest" description="Disordered" evidence="4">
    <location>
        <begin position="1"/>
        <end position="36"/>
    </location>
</feature>
<feature type="region of interest" description="Mediates interaction with sodium channels">
    <location>
        <begin position="67"/>
        <end position="201"/>
    </location>
</feature>
<feature type="region of interest" description="Disordered" evidence="4">
    <location>
        <begin position="213"/>
        <end position="245"/>
    </location>
</feature>
<feature type="compositionally biased region" description="Polar residues" evidence="4">
    <location>
        <begin position="215"/>
        <end position="245"/>
    </location>
</feature>
<feature type="modified residue" description="Phosphoserine" evidence="24">
    <location>
        <position position="208"/>
    </location>
</feature>
<feature type="splice variant" id="VSP_001529" description="In isoform 2." evidence="17">
    <original>MAAAIASSLIRQKRQAREREKSNACKCVSSPSKGKTSCDKNKLNVFSRVKLFGSKKRRRRRP</original>
    <variation>MALLRKSYS</variation>
    <location>
        <begin position="1"/>
        <end position="62"/>
    </location>
</feature>
<feature type="splice variant" id="VSP_043461" description="In isoform 3." evidence="19">
    <original>MAAAIASSLIRQKRQAREREKSNACKCVSSPSKGKTSCDKNKLNVFSRVKLFGSKKRRRRRP</original>
    <variation>MSGKVTKPKEEKDASKVLDDAPPGTQEYIMLRQDSIQSAELKKKESPFRAKCHEIFCCPLKQVHHKENTEPE</variation>
    <location>
        <begin position="1"/>
        <end position="62"/>
    </location>
</feature>
<feature type="splice variant" id="VSP_043460" description="In isoform 4." evidence="19">
    <original>MAAAIASSLIRQKRQAREREKSNACKCVSSPSKGKTSCDKNKLNVFSRVKLFGSKKRRRRRP</original>
    <variation>MSGKVTKPKEEKDASK</variation>
    <location>
        <begin position="1"/>
        <end position="62"/>
    </location>
</feature>
<feature type="splice variant" id="VSP_044129" description="In isoform 5." evidence="21">
    <original>MAAAIASSLIRQKRQAREREKSNACKCVSSPSKGKTSCDKNKLNVFSRVKLFGSKKRRRRRP</original>
    <variation>MLRQDSIQSAELKKKESPFRAKCHEIFCCPLKQVHHKENTEPE</variation>
    <location>
        <begin position="1"/>
        <end position="62"/>
    </location>
</feature>
<feature type="sequence variant" id="VAR_087934" description="In DEE90; dbSNP:rs2124253547." evidence="13">
    <original>I</original>
    <variation>S</variation>
    <location>
        <position position="5"/>
    </location>
</feature>
<feature type="sequence variant" id="VAR_085434" description="In DEE90; loss of ability to induce SCN8A long-term inactivation; no effect on pro-excitatory properties; no effect on interaction with SCN8A; dbSNP:rs2090039774." evidence="11">
    <original>R</original>
    <variation>C</variation>
    <location>
        <position position="11"/>
    </location>
</feature>
<feature type="sequence variant" id="VAR_085435" description="In DEE90; uncertain significance; loss of ability to induce SCN8A long-term inactivation; no effect on pro-excitatory properties; no effect on interaction with SCN8A; dbSNP:rs2090039732." evidence="11">
    <original>R</original>
    <variation>P</variation>
    <location>
        <position position="11"/>
    </location>
</feature>
<feature type="sequence variant" id="VAR_085436" description="In DEE90; loss of ability to induce SCN8A long-term inactivation; no effect on pro-excitatory properties; no effect on interaction with SCN8A; dbSNP:rs2090039606." evidence="11">
    <original>R</original>
    <variation>T</variation>
    <location>
        <position position="14"/>
    </location>
</feature>
<feature type="sequence variant" id="VAR_020945" description="In dbSNP:rs17510270." evidence="16">
    <original>K</original>
    <variation>Q</variation>
    <location>
        <position position="197"/>
    </location>
</feature>
<feature type="mutagenesis site" description="Loss of interaction with SCN1A." evidence="9">
    <original>P</original>
    <variation>Q</variation>
    <location>
        <position position="207"/>
    </location>
</feature>
<feature type="strand" evidence="25">
    <location>
        <begin position="66"/>
        <end position="75"/>
    </location>
</feature>
<feature type="turn" evidence="26">
    <location>
        <begin position="76"/>
        <end position="78"/>
    </location>
</feature>
<feature type="strand" evidence="25">
    <location>
        <begin position="80"/>
        <end position="83"/>
    </location>
</feature>
<feature type="strand" evidence="25">
    <location>
        <begin position="89"/>
        <end position="93"/>
    </location>
</feature>
<feature type="helix" evidence="25">
    <location>
        <begin position="98"/>
        <end position="100"/>
    </location>
</feature>
<feature type="strand" evidence="25">
    <location>
        <begin position="102"/>
        <end position="108"/>
    </location>
</feature>
<feature type="strand" evidence="25">
    <location>
        <begin position="111"/>
        <end position="116"/>
    </location>
</feature>
<feature type="turn" evidence="25">
    <location>
        <begin position="117"/>
        <end position="119"/>
    </location>
</feature>
<feature type="strand" evidence="25">
    <location>
        <begin position="122"/>
        <end position="125"/>
    </location>
</feature>
<feature type="strand" evidence="25">
    <location>
        <begin position="131"/>
        <end position="137"/>
    </location>
</feature>
<feature type="helix" evidence="25">
    <location>
        <begin position="139"/>
        <end position="141"/>
    </location>
</feature>
<feature type="strand" evidence="25">
    <location>
        <begin position="142"/>
        <end position="148"/>
    </location>
</feature>
<feature type="turn" evidence="25">
    <location>
        <begin position="149"/>
        <end position="151"/>
    </location>
</feature>
<feature type="strand" evidence="25">
    <location>
        <begin position="152"/>
        <end position="161"/>
    </location>
</feature>
<feature type="turn" evidence="25">
    <location>
        <begin position="163"/>
        <end position="165"/>
    </location>
</feature>
<feature type="strand" evidence="25">
    <location>
        <begin position="168"/>
        <end position="170"/>
    </location>
</feature>
<feature type="strand" evidence="25">
    <location>
        <begin position="177"/>
        <end position="179"/>
    </location>
</feature>
<feature type="helix" evidence="25">
    <location>
        <begin position="182"/>
        <end position="184"/>
    </location>
</feature>
<feature type="helix" evidence="25">
    <location>
        <begin position="190"/>
        <end position="192"/>
    </location>
</feature>
<feature type="strand" evidence="25">
    <location>
        <begin position="194"/>
        <end position="204"/>
    </location>
</feature>
<dbReference type="EMBL" id="U66198">
    <property type="protein sequence ID" value="AAB18914.1"/>
    <property type="molecule type" value="mRNA"/>
</dbReference>
<dbReference type="EMBL" id="AF100143">
    <property type="protein sequence ID" value="AAD16400.1"/>
    <property type="molecule type" value="mRNA"/>
</dbReference>
<dbReference type="EMBL" id="AF100144">
    <property type="protein sequence ID" value="AAD16401.1"/>
    <property type="molecule type" value="mRNA"/>
</dbReference>
<dbReference type="EMBL" id="AK297545">
    <property type="protein sequence ID" value="BAH12613.1"/>
    <property type="molecule type" value="mRNA"/>
</dbReference>
<dbReference type="EMBL" id="AK303685">
    <property type="protein sequence ID" value="BAH14016.1"/>
    <property type="molecule type" value="mRNA"/>
</dbReference>
<dbReference type="EMBL" id="AK316170">
    <property type="protein sequence ID" value="BAH14541.1"/>
    <property type="molecule type" value="mRNA"/>
</dbReference>
<dbReference type="EMBL" id="AY672645">
    <property type="protein sequence ID" value="AAT70720.1"/>
    <property type="molecule type" value="Genomic_DNA"/>
</dbReference>
<dbReference type="EMBL" id="AL031386">
    <property type="protein sequence ID" value="CAI95616.1"/>
    <property type="molecule type" value="Genomic_DNA"/>
</dbReference>
<dbReference type="EMBL" id="Z82193">
    <property type="protein sequence ID" value="CAI95616.1"/>
    <property type="status" value="JOINED"/>
    <property type="molecule type" value="Genomic_DNA"/>
</dbReference>
<dbReference type="EMBL" id="Z82193">
    <property type="protein sequence ID" value="CAI95677.1"/>
    <property type="molecule type" value="Genomic_DNA"/>
</dbReference>
<dbReference type="EMBL" id="AL031386">
    <property type="protein sequence ID" value="CAI95677.1"/>
    <property type="status" value="JOINED"/>
    <property type="molecule type" value="Genomic_DNA"/>
</dbReference>
<dbReference type="EMBL" id="Z81007">
    <property type="status" value="NOT_ANNOTATED_CDS"/>
    <property type="molecule type" value="Genomic_DNA"/>
</dbReference>
<dbReference type="EMBL" id="Z82204">
    <property type="protein sequence ID" value="CAI42696.1"/>
    <property type="molecule type" value="Genomic_DNA"/>
</dbReference>
<dbReference type="EMBL" id="Z83313">
    <property type="status" value="NOT_ANNOTATED_CDS"/>
    <property type="molecule type" value="Genomic_DNA"/>
</dbReference>
<dbReference type="EMBL" id="AL023798">
    <property type="status" value="NOT_ANNOTATED_CDS"/>
    <property type="molecule type" value="Genomic_DNA"/>
</dbReference>
<dbReference type="EMBL" id="AL023800">
    <property type="status" value="NOT_ANNOTATED_CDS"/>
    <property type="molecule type" value="Genomic_DNA"/>
</dbReference>
<dbReference type="EMBL" id="AL034398">
    <property type="status" value="NOT_ANNOTATED_CDS"/>
    <property type="molecule type" value="Genomic_DNA"/>
</dbReference>
<dbReference type="EMBL" id="AL034416">
    <property type="status" value="NOT_ANNOTATED_CDS"/>
    <property type="molecule type" value="Genomic_DNA"/>
</dbReference>
<dbReference type="EMBL" id="CH471150">
    <property type="protein sequence ID" value="EAW88435.1"/>
    <property type="molecule type" value="Genomic_DNA"/>
</dbReference>
<dbReference type="EMBL" id="CH471150">
    <property type="protein sequence ID" value="EAW88438.1"/>
    <property type="molecule type" value="Genomic_DNA"/>
</dbReference>
<dbReference type="EMBL" id="CH471150">
    <property type="protein sequence ID" value="EAW88440.1"/>
    <property type="molecule type" value="Genomic_DNA"/>
</dbReference>
<dbReference type="EMBL" id="BC012347">
    <property type="protein sequence ID" value="AAH12347.1"/>
    <property type="molecule type" value="mRNA"/>
</dbReference>
<dbReference type="EMBL" id="BC034340">
    <property type="protein sequence ID" value="AAH34340.1"/>
    <property type="molecule type" value="mRNA"/>
</dbReference>
<dbReference type="EMBL" id="AF199612">
    <property type="protein sequence ID" value="AAF31399.1"/>
    <property type="molecule type" value="mRNA"/>
</dbReference>
<dbReference type="EMBL" id="AF199613">
    <property type="protein sequence ID" value="AAF31400.1"/>
    <property type="molecule type" value="mRNA"/>
</dbReference>
<dbReference type="CCDS" id="CCDS14664.1">
    <molecule id="Q92913-2"/>
</dbReference>
<dbReference type="CCDS" id="CCDS14665.1">
    <molecule id="Q92913-1"/>
</dbReference>
<dbReference type="CCDS" id="CCDS55511.1">
    <molecule id="Q92913-5"/>
</dbReference>
<dbReference type="CCDS" id="CCDS55512.1">
    <molecule id="Q92913-4"/>
</dbReference>
<dbReference type="CCDS" id="CCDS55513.1">
    <molecule id="Q92913-3"/>
</dbReference>
<dbReference type="RefSeq" id="NP_001132970.1">
    <molecule id="Q92913-4"/>
    <property type="nucleotide sequence ID" value="NM_001139498.2"/>
</dbReference>
<dbReference type="RefSeq" id="NP_001132972.1">
    <molecule id="Q92913-3"/>
    <property type="nucleotide sequence ID" value="NM_001139500.2"/>
</dbReference>
<dbReference type="RefSeq" id="NP_001132973.1">
    <molecule id="Q92913-5"/>
    <property type="nucleotide sequence ID" value="NM_001139501.2"/>
</dbReference>
<dbReference type="RefSeq" id="NP_001132974.1">
    <molecule id="Q92913-5"/>
    <property type="nucleotide sequence ID" value="NM_001139502.2"/>
</dbReference>
<dbReference type="RefSeq" id="NP_004105.1">
    <molecule id="Q92913-1"/>
    <property type="nucleotide sequence ID" value="NM_004114.5"/>
</dbReference>
<dbReference type="RefSeq" id="NP_378668.1">
    <molecule id="Q92913-2"/>
    <property type="nucleotide sequence ID" value="NM_033642.3"/>
</dbReference>
<dbReference type="RefSeq" id="XP_005262456.1">
    <property type="nucleotide sequence ID" value="XM_005262399.1"/>
</dbReference>
<dbReference type="PDB" id="3HBW">
    <property type="method" value="X-ray"/>
    <property type="resolution" value="1.90 A"/>
    <property type="chains" value="A/B=53-245"/>
</dbReference>
<dbReference type="PDB" id="4DCK">
    <property type="method" value="X-ray"/>
    <property type="resolution" value="2.20 A"/>
    <property type="chains" value="C=63-245"/>
</dbReference>
<dbReference type="PDB" id="4JPZ">
    <property type="method" value="X-ray"/>
    <property type="resolution" value="3.02 A"/>
    <property type="chains" value="A/E=60-245"/>
</dbReference>
<dbReference type="PDBsum" id="3HBW"/>
<dbReference type="PDBsum" id="4DCK"/>
<dbReference type="PDBsum" id="4JPZ"/>
<dbReference type="SMR" id="Q92913"/>
<dbReference type="BioGRID" id="108549">
    <property type="interactions" value="179"/>
</dbReference>
<dbReference type="CORUM" id="Q92913"/>
<dbReference type="DIP" id="DIP-50447N"/>
<dbReference type="FunCoup" id="Q92913">
    <property type="interactions" value="311"/>
</dbReference>
<dbReference type="IntAct" id="Q92913">
    <property type="interactions" value="108"/>
</dbReference>
<dbReference type="MINT" id="Q92913"/>
<dbReference type="STRING" id="9606.ENSP00000396198"/>
<dbReference type="iPTMnet" id="Q92913"/>
<dbReference type="PhosphoSitePlus" id="Q92913"/>
<dbReference type="BioMuta" id="FGF13"/>
<dbReference type="DMDM" id="2494461"/>
<dbReference type="MassIVE" id="Q92913"/>
<dbReference type="PaxDb" id="9606-ENSP00000322390"/>
<dbReference type="PeptideAtlas" id="Q92913"/>
<dbReference type="ProteomicsDB" id="12773"/>
<dbReference type="ProteomicsDB" id="75595">
    <molecule id="Q92913-1"/>
</dbReference>
<dbReference type="ProteomicsDB" id="75596">
    <molecule id="Q92913-2"/>
</dbReference>
<dbReference type="ProteomicsDB" id="75597">
    <molecule id="Q92913-3"/>
</dbReference>
<dbReference type="ProteomicsDB" id="75598">
    <molecule id="Q92913-4"/>
</dbReference>
<dbReference type="Pumba" id="Q92913"/>
<dbReference type="ABCD" id="Q92913">
    <property type="antibodies" value="3 sequenced antibodies"/>
</dbReference>
<dbReference type="Antibodypedia" id="468">
    <property type="antibodies" value="615 antibodies from 39 providers"/>
</dbReference>
<dbReference type="DNASU" id="2258"/>
<dbReference type="Ensembl" id="ENST00000305414.9">
    <molecule id="Q92913-2"/>
    <property type="protein sequence ID" value="ENSP00000303391.4"/>
    <property type="gene ID" value="ENSG00000129682.16"/>
</dbReference>
<dbReference type="Ensembl" id="ENST00000315930.11">
    <molecule id="Q92913-1"/>
    <property type="protein sequence ID" value="ENSP00000322390.6"/>
    <property type="gene ID" value="ENSG00000129682.16"/>
</dbReference>
<dbReference type="Ensembl" id="ENST00000436198.6">
    <molecule id="Q92913-3"/>
    <property type="protein sequence ID" value="ENSP00000396198.2"/>
    <property type="gene ID" value="ENSG00000129682.16"/>
</dbReference>
<dbReference type="Ensembl" id="ENST00000441825.8">
    <molecule id="Q92913-5"/>
    <property type="protein sequence ID" value="ENSP00000409276.2"/>
    <property type="gene ID" value="ENSG00000129682.16"/>
</dbReference>
<dbReference type="Ensembl" id="ENST00000626909.2">
    <molecule id="Q92913-4"/>
    <property type="protein sequence ID" value="ENSP00000487411.1"/>
    <property type="gene ID" value="ENSG00000129682.16"/>
</dbReference>
<dbReference type="GeneID" id="2258"/>
<dbReference type="KEGG" id="hsa:2258"/>
<dbReference type="MANE-Select" id="ENST00000315930.11">
    <property type="protein sequence ID" value="ENSP00000322390.6"/>
    <property type="RefSeq nucleotide sequence ID" value="NM_004114.5"/>
    <property type="RefSeq protein sequence ID" value="NP_004105.1"/>
</dbReference>
<dbReference type="UCSC" id="uc004fal.4">
    <molecule id="Q92913-1"/>
    <property type="organism name" value="human"/>
</dbReference>
<dbReference type="AGR" id="HGNC:3670"/>
<dbReference type="CTD" id="2258"/>
<dbReference type="DisGeNET" id="2258"/>
<dbReference type="GeneCards" id="FGF13"/>
<dbReference type="HGNC" id="HGNC:3670">
    <property type="gene designation" value="FGF13"/>
</dbReference>
<dbReference type="HPA" id="ENSG00000129682">
    <property type="expression patterns" value="Tissue enhanced (brain, skeletal muscle, tongue)"/>
</dbReference>
<dbReference type="MalaCards" id="FGF13"/>
<dbReference type="MIM" id="300070">
    <property type="type" value="gene"/>
</dbReference>
<dbReference type="MIM" id="301058">
    <property type="type" value="phenotype"/>
</dbReference>
<dbReference type="MIM" id="301095">
    <property type="type" value="phenotype"/>
</dbReference>
<dbReference type="neXtProt" id="NX_Q92913"/>
<dbReference type="OpenTargets" id="ENSG00000129682"/>
<dbReference type="Orphanet" id="36387">
    <property type="disease" value="Genetic epilepsy with febrile seizure plus"/>
</dbReference>
<dbReference type="PharmGKB" id="PA28109"/>
<dbReference type="VEuPathDB" id="HostDB:ENSG00000129682"/>
<dbReference type="eggNOG" id="KOG3885">
    <property type="taxonomic scope" value="Eukaryota"/>
</dbReference>
<dbReference type="GeneTree" id="ENSGT00940000162313"/>
<dbReference type="HOGENOM" id="CLU_081609_2_0_1"/>
<dbReference type="InParanoid" id="Q92913"/>
<dbReference type="OMA" id="MECKFKE"/>
<dbReference type="OrthoDB" id="6158176at2759"/>
<dbReference type="PAN-GO" id="Q92913">
    <property type="GO annotations" value="4 GO annotations based on evolutionary models"/>
</dbReference>
<dbReference type="PhylomeDB" id="Q92913"/>
<dbReference type="TreeFam" id="TF317805"/>
<dbReference type="PathwayCommons" id="Q92913"/>
<dbReference type="Reactome" id="R-HSA-5576892">
    <property type="pathway name" value="Phase 0 - rapid depolarisation"/>
</dbReference>
<dbReference type="SignaLink" id="Q92913"/>
<dbReference type="SIGNOR" id="Q92913"/>
<dbReference type="BioGRID-ORCS" id="2258">
    <property type="hits" value="19 hits in 782 CRISPR screens"/>
</dbReference>
<dbReference type="ChiTaRS" id="FGF13">
    <property type="organism name" value="human"/>
</dbReference>
<dbReference type="EvolutionaryTrace" id="Q92913"/>
<dbReference type="GeneWiki" id="FGF13"/>
<dbReference type="GenomeRNAi" id="2258"/>
<dbReference type="Pharos" id="Q92913">
    <property type="development level" value="Tbio"/>
</dbReference>
<dbReference type="PRO" id="PR:Q92913"/>
<dbReference type="Proteomes" id="UP000005640">
    <property type="component" value="Chromosome X"/>
</dbReference>
<dbReference type="RNAct" id="Q92913">
    <property type="molecule type" value="protein"/>
</dbReference>
<dbReference type="Bgee" id="ENSG00000129682">
    <property type="expression patterns" value="Expressed in endothelial cell and 196 other cell types or tissues"/>
</dbReference>
<dbReference type="ExpressionAtlas" id="Q92913">
    <property type="expression patterns" value="baseline and differential"/>
</dbReference>
<dbReference type="GO" id="GO:0030424">
    <property type="term" value="C:axon"/>
    <property type="evidence" value="ECO:0000250"/>
    <property type="project" value="UniProtKB"/>
</dbReference>
<dbReference type="GO" id="GO:0005737">
    <property type="term" value="C:cytoplasm"/>
    <property type="evidence" value="ECO:0000250"/>
    <property type="project" value="BHF-UCL"/>
</dbReference>
<dbReference type="GO" id="GO:0005829">
    <property type="term" value="C:cytosol"/>
    <property type="evidence" value="ECO:0000314"/>
    <property type="project" value="HPA"/>
</dbReference>
<dbReference type="GO" id="GO:0030425">
    <property type="term" value="C:dendrite"/>
    <property type="evidence" value="ECO:0000250"/>
    <property type="project" value="UniProtKB"/>
</dbReference>
<dbReference type="GO" id="GO:0030175">
    <property type="term" value="C:filopodium"/>
    <property type="evidence" value="ECO:0000250"/>
    <property type="project" value="UniProtKB"/>
</dbReference>
<dbReference type="GO" id="GO:0030426">
    <property type="term" value="C:growth cone"/>
    <property type="evidence" value="ECO:0000250"/>
    <property type="project" value="UniProtKB"/>
</dbReference>
<dbReference type="GO" id="GO:0014704">
    <property type="term" value="C:intercalated disc"/>
    <property type="evidence" value="ECO:0000250"/>
    <property type="project" value="UniProtKB"/>
</dbReference>
<dbReference type="GO" id="GO:0016328">
    <property type="term" value="C:lateral plasma membrane"/>
    <property type="evidence" value="ECO:0000250"/>
    <property type="project" value="BHF-UCL"/>
</dbReference>
<dbReference type="GO" id="GO:0005874">
    <property type="term" value="C:microtubule"/>
    <property type="evidence" value="ECO:0000250"/>
    <property type="project" value="UniProtKB"/>
</dbReference>
<dbReference type="GO" id="GO:0043005">
    <property type="term" value="C:neuron projection"/>
    <property type="evidence" value="ECO:0000250"/>
    <property type="project" value="UniProtKB"/>
</dbReference>
<dbReference type="GO" id="GO:0005634">
    <property type="term" value="C:nucleus"/>
    <property type="evidence" value="ECO:0000314"/>
    <property type="project" value="MGI"/>
</dbReference>
<dbReference type="GO" id="GO:0005886">
    <property type="term" value="C:plasma membrane"/>
    <property type="evidence" value="ECO:0000250"/>
    <property type="project" value="UniProtKB"/>
</dbReference>
<dbReference type="GO" id="GO:0042383">
    <property type="term" value="C:sarcolemma"/>
    <property type="evidence" value="ECO:0007669"/>
    <property type="project" value="UniProtKB-SubCell"/>
</dbReference>
<dbReference type="GO" id="GO:0048487">
    <property type="term" value="F:beta-tubulin binding"/>
    <property type="evidence" value="ECO:0000250"/>
    <property type="project" value="UniProtKB"/>
</dbReference>
<dbReference type="GO" id="GO:0008083">
    <property type="term" value="F:growth factor activity"/>
    <property type="evidence" value="ECO:0000304"/>
    <property type="project" value="ProtInc"/>
</dbReference>
<dbReference type="GO" id="GO:0008017">
    <property type="term" value="F:microtubule binding"/>
    <property type="evidence" value="ECO:0000250"/>
    <property type="project" value="UniProtKB"/>
</dbReference>
<dbReference type="GO" id="GO:0017080">
    <property type="term" value="F:sodium channel regulator activity"/>
    <property type="evidence" value="ECO:0000314"/>
    <property type="project" value="UniProtKB"/>
</dbReference>
<dbReference type="GO" id="GO:0044325">
    <property type="term" value="F:transmembrane transporter binding"/>
    <property type="evidence" value="ECO:0000250"/>
    <property type="project" value="UniProtKB"/>
</dbReference>
<dbReference type="GO" id="GO:0048755">
    <property type="term" value="P:branching morphogenesis of a nerve"/>
    <property type="evidence" value="ECO:0007669"/>
    <property type="project" value="Ensembl"/>
</dbReference>
<dbReference type="GO" id="GO:0007267">
    <property type="term" value="P:cell-cell signaling"/>
    <property type="evidence" value="ECO:0000304"/>
    <property type="project" value="ProtInc"/>
</dbReference>
<dbReference type="GO" id="GO:0021795">
    <property type="term" value="P:cerebral cortex cell migration"/>
    <property type="evidence" value="ECO:0000250"/>
    <property type="project" value="UniProtKB"/>
</dbReference>
<dbReference type="GO" id="GO:0045200">
    <property type="term" value="P:establishment of neuroblast polarity"/>
    <property type="evidence" value="ECO:0000250"/>
    <property type="project" value="UniProtKB"/>
</dbReference>
<dbReference type="GO" id="GO:0021766">
    <property type="term" value="P:hippocampus development"/>
    <property type="evidence" value="ECO:0000250"/>
    <property type="project" value="UniProtKB"/>
</dbReference>
<dbReference type="GO" id="GO:1904862">
    <property type="term" value="P:inhibitory synapse assembly"/>
    <property type="evidence" value="ECO:0000250"/>
    <property type="project" value="UniProtKB"/>
</dbReference>
<dbReference type="GO" id="GO:0007612">
    <property type="term" value="P:learning"/>
    <property type="evidence" value="ECO:0000250"/>
    <property type="project" value="UniProtKB"/>
</dbReference>
<dbReference type="GO" id="GO:0000165">
    <property type="term" value="P:MAPK cascade"/>
    <property type="evidence" value="ECO:0000314"/>
    <property type="project" value="MGI"/>
</dbReference>
<dbReference type="GO" id="GO:0007613">
    <property type="term" value="P:memory"/>
    <property type="evidence" value="ECO:0000250"/>
    <property type="project" value="UniProtKB"/>
</dbReference>
<dbReference type="GO" id="GO:0046785">
    <property type="term" value="P:microtubule polymerization"/>
    <property type="evidence" value="ECO:0000250"/>
    <property type="project" value="UniProtKB"/>
</dbReference>
<dbReference type="GO" id="GO:0048671">
    <property type="term" value="P:negative regulation of collateral sprouting"/>
    <property type="evidence" value="ECO:0000250"/>
    <property type="project" value="UniProtKB"/>
</dbReference>
<dbReference type="GO" id="GO:0007026">
    <property type="term" value="P:negative regulation of microtubule depolymerization"/>
    <property type="evidence" value="ECO:0000250"/>
    <property type="project" value="UniProtKB"/>
</dbReference>
<dbReference type="GO" id="GO:0007399">
    <property type="term" value="P:nervous system development"/>
    <property type="evidence" value="ECO:0000304"/>
    <property type="project" value="ProtInc"/>
</dbReference>
<dbReference type="GO" id="GO:0022008">
    <property type="term" value="P:neurogenesis"/>
    <property type="evidence" value="ECO:0000318"/>
    <property type="project" value="GO_Central"/>
</dbReference>
<dbReference type="GO" id="GO:0001764">
    <property type="term" value="P:neuron migration"/>
    <property type="evidence" value="ECO:0000250"/>
    <property type="project" value="UniProtKB"/>
</dbReference>
<dbReference type="GO" id="GO:1905152">
    <property type="term" value="P:positive regulation of voltage-gated sodium channel activity"/>
    <property type="evidence" value="ECO:0000314"/>
    <property type="project" value="UniProtKB"/>
</dbReference>
<dbReference type="GO" id="GO:0072659">
    <property type="term" value="P:protein localization to plasma membrane"/>
    <property type="evidence" value="ECO:0000250"/>
    <property type="project" value="UniProtKB"/>
</dbReference>
<dbReference type="GO" id="GO:0098909">
    <property type="term" value="P:regulation of cardiac muscle cell action potential involved in regulation of contraction"/>
    <property type="evidence" value="ECO:0000250"/>
    <property type="project" value="BHF-UCL"/>
</dbReference>
<dbReference type="GO" id="GO:0007165">
    <property type="term" value="P:signal transduction"/>
    <property type="evidence" value="ECO:0000304"/>
    <property type="project" value="ProtInc"/>
</dbReference>
<dbReference type="GO" id="GO:0006814">
    <property type="term" value="P:sodium ion transport"/>
    <property type="evidence" value="ECO:0000250"/>
    <property type="project" value="BHF-UCL"/>
</dbReference>
<dbReference type="CDD" id="cd23329">
    <property type="entry name" value="beta-trefoil_FGF13"/>
    <property type="match status" value="1"/>
</dbReference>
<dbReference type="DisProt" id="DP01404"/>
<dbReference type="FunFam" id="2.80.10.50:FF:000001">
    <property type="entry name" value="Fibroblast growth factor"/>
    <property type="match status" value="1"/>
</dbReference>
<dbReference type="Gene3D" id="2.80.10.50">
    <property type="match status" value="1"/>
</dbReference>
<dbReference type="InterPro" id="IPR002209">
    <property type="entry name" value="Fibroblast_GF_fam"/>
</dbReference>
<dbReference type="InterPro" id="IPR008996">
    <property type="entry name" value="IL1/FGF"/>
</dbReference>
<dbReference type="PANTHER" id="PTHR11486">
    <property type="entry name" value="FIBROBLAST GROWTH FACTOR"/>
    <property type="match status" value="1"/>
</dbReference>
<dbReference type="Pfam" id="PF00167">
    <property type="entry name" value="FGF"/>
    <property type="match status" value="1"/>
</dbReference>
<dbReference type="PRINTS" id="PR00263">
    <property type="entry name" value="HBGFFGF"/>
</dbReference>
<dbReference type="PRINTS" id="PR00262">
    <property type="entry name" value="IL1HBGF"/>
</dbReference>
<dbReference type="SMART" id="SM00442">
    <property type="entry name" value="FGF"/>
    <property type="match status" value="1"/>
</dbReference>
<dbReference type="SUPFAM" id="SSF50353">
    <property type="entry name" value="Cytokine"/>
    <property type="match status" value="1"/>
</dbReference>
<dbReference type="PROSITE" id="PS00247">
    <property type="entry name" value="HBGF_FGF"/>
    <property type="match status" value="1"/>
</dbReference>
<sequence length="245" mass="27564">MAAAIASSLIRQKRQAREREKSNACKCVSSPSKGKTSCDKNKLNVFSRVKLFGSKKRRRRRPEPQLKGIVTKLYSRQGYHLQLQADGTIDGTKDEDSTYTLFNLIPVGLRVVAIQGVQTKLYLAMNSEGYLYTSELFTPECKFKESVFENYYVTYSSMIYRQQQSGRGWYLGLNKEGEIMKGNHVKKNKPAAHFLPKPLKVAMYKEPSLHDLTEFSRSGSGTPTKSRSVSGVLNGGKSMSHNEST</sequence>
<gene>
    <name evidence="23" type="primary">FGF13</name>
    <name type="synonym">FHF2</name>
</gene>
<protein>
    <recommendedName>
        <fullName evidence="21">Fibroblast growth factor 13</fullName>
        <shortName>FGF-13</shortName>
    </recommendedName>
    <alternativeName>
        <fullName>Fibroblast growth factor homologous factor 2</fullName>
        <shortName>FHF-2</shortName>
    </alternativeName>
</protein>
<evidence type="ECO:0000250" key="1"/>
<evidence type="ECO:0000250" key="2">
    <source>
        <dbReference type="UniProtKB" id="P61329"/>
    </source>
</evidence>
<evidence type="ECO:0000250" key="3">
    <source>
        <dbReference type="UniProtKB" id="P70377"/>
    </source>
</evidence>
<evidence type="ECO:0000256" key="4">
    <source>
        <dbReference type="SAM" id="MobiDB-lite"/>
    </source>
</evidence>
<evidence type="ECO:0000269" key="5">
    <source>
    </source>
</evidence>
<evidence type="ECO:0000269" key="6">
    <source>
    </source>
</evidence>
<evidence type="ECO:0000269" key="7">
    <source>
    </source>
</evidence>
<evidence type="ECO:0000269" key="8">
    <source>
    </source>
</evidence>
<evidence type="ECO:0000269" key="9">
    <source>
    </source>
</evidence>
<evidence type="ECO:0000269" key="10">
    <source>
    </source>
</evidence>
<evidence type="ECO:0000269" key="11">
    <source>
    </source>
</evidence>
<evidence type="ECO:0000269" key="12">
    <source>
    </source>
</evidence>
<evidence type="ECO:0000269" key="13">
    <source>
    </source>
</evidence>
<evidence type="ECO:0000269" key="14">
    <source>
    </source>
</evidence>
<evidence type="ECO:0000269" key="15">
    <source>
    </source>
</evidence>
<evidence type="ECO:0000269" key="16">
    <source ref="4"/>
</evidence>
<evidence type="ECO:0000303" key="17">
    <source>
    </source>
</evidence>
<evidence type="ECO:0000303" key="18">
    <source>
    </source>
</evidence>
<evidence type="ECO:0000303" key="19">
    <source>
    </source>
</evidence>
<evidence type="ECO:0000303" key="20">
    <source>
    </source>
</evidence>
<evidence type="ECO:0000305" key="21"/>
<evidence type="ECO:0000305" key="22">
    <source>
    </source>
</evidence>
<evidence type="ECO:0000312" key="23">
    <source>
        <dbReference type="HGNC" id="HGNC:3670"/>
    </source>
</evidence>
<evidence type="ECO:0007744" key="24">
    <source>
    </source>
</evidence>
<evidence type="ECO:0007829" key="25">
    <source>
        <dbReference type="PDB" id="3HBW"/>
    </source>
</evidence>
<evidence type="ECO:0007829" key="26">
    <source>
        <dbReference type="PDB" id="4DCK"/>
    </source>
</evidence>
<proteinExistence type="evidence at protein level"/>
<name>FGF13_HUMAN</name>
<accession>Q92913</accession>
<accession>B1AK18</accession>
<accession>B7Z4M7</accession>
<accession>B7Z8N0</accession>
<accession>D3DWH4</accession>
<accession>O95830</accession>
<accession>Q9NZH9</accession>
<accession>Q9NZI0</accession>
<comment type="function">
    <text evidence="3 7 11 14">Microtubule-binding protein which directly binds tubulin and is involved in both polymerization and stabilization of microtubules (By similarity). Through its action on microtubules, may participate in the refinement of axons by negatively regulating axonal and leading processes branching (By similarity). Plays a crucial role in neuron polarization and migration in the cerebral cortex and the hippocampus (By similarity). Regulates voltage-gated sodium channel transport and function (PubMed:15282281, PubMed:33245860, PubMed:36696443). May also play a role in MAPK signaling (By similarity). Required for the development of axonal initial segment-targeting inhibitory GABAergic synapses made by chandelier neurons (By similarity).</text>
</comment>
<comment type="subunit">
    <text evidence="6 7 8 9 10 11">Interacts with SCN8A; regulates SCN8A activity (PubMed:15282281, PubMed:21566136, PubMed:33245860). Interacts with SCN1A; may regulate SCN1A activity (PubMed:19406745, PubMed:21566136). Interacts with SCN5A; the interaction is direct and may regulate SNC5A density at membranes and function (PubMed:21817159). May also interact with SCN2A and SCN11A (PubMed:19406745, PubMed:21566136). Interacts with MAPK8IP2; may regulate the MAPK8IP2 scaffolding activity (PubMed:11378392).</text>
</comment>
<comment type="interaction">
    <interactant intactId="EBI-1054883">
        <id>Q92913</id>
    </interactant>
    <interactant intactId="EBI-742388">
        <id>Q9H8W4</id>
        <label>PLEKHF2</label>
    </interactant>
    <organismsDiffer>false</organismsDiffer>
    <experiments>3</experiments>
</comment>
<comment type="subcellular location">
    <molecule>Isoform 1</molecule>
    <subcellularLocation>
        <location evidence="5">Nucleus</location>
    </subcellularLocation>
</comment>
<comment type="subcellular location">
    <molecule>Isoform 2</molecule>
    <subcellularLocation>
        <location evidence="5">Cytoplasm</location>
    </subcellularLocation>
    <subcellularLocation>
        <location evidence="5">Nucleus</location>
    </subcellularLocation>
</comment>
<comment type="subcellular location">
    <molecule>Isoform 3</molecule>
    <subcellularLocation>
        <location evidence="22">Cytoplasm</location>
    </subcellularLocation>
    <subcellularLocation>
        <location evidence="22">Nucleus</location>
    </subcellularLocation>
</comment>
<comment type="subcellular location">
    <molecule>Isoform 4</molecule>
    <subcellularLocation>
        <location evidence="2">Cytoplasm</location>
    </subcellularLocation>
    <subcellularLocation>
        <location evidence="2">Nucleus</location>
    </subcellularLocation>
</comment>
<comment type="subcellular location">
    <molecule>Isoform 5</molecule>
    <subcellularLocation>
        <location evidence="2">Cytoplasm</location>
    </subcellularLocation>
    <subcellularLocation>
        <location evidence="2">Nucleus</location>
    </subcellularLocation>
</comment>
<comment type="subcellular location">
    <subcellularLocation>
        <location evidence="3">Cell projection</location>
        <location evidence="3">Filopodium</location>
    </subcellularLocation>
    <subcellularLocation>
        <location evidence="3">Cell projection</location>
        <location evidence="3">Growth cone</location>
    </subcellularLocation>
    <subcellularLocation>
        <location evidence="3">Cell projection</location>
        <location evidence="3">Dendrite</location>
    </subcellularLocation>
    <subcellularLocation>
        <location evidence="3">Cell membrane</location>
        <location evidence="3">Sarcolemma</location>
    </subcellularLocation>
    <subcellularLocation>
        <location evidence="3">Cytoplasm</location>
    </subcellularLocation>
    <text evidence="3">Not secreted. Localizes to the lateral membrane and intercalated disks of myocytes.</text>
</comment>
<comment type="alternative products">
    <event type="alternative splicing"/>
    <isoform>
        <id>Q92913-1</id>
        <name>1</name>
        <name>FGF13A</name>
        <name>1A</name>
        <name evidence="18">hFHF-2(1S)</name>
        <name>FGF13S</name>
        <sequence type="displayed"/>
    </isoform>
    <isoform>
        <id>Q92913-2</id>
        <name>2</name>
        <name>FGF13B</name>
        <name>1B</name>
        <name evidence="18">hFHF-2(1U)</name>
        <name>FGF13U</name>
        <name evidence="20">FHF2B</name>
        <sequence type="described" ref="VSP_001529"/>
    </isoform>
    <isoform>
        <id>Q92913-3</id>
        <name>3</name>
        <name evidence="18">hFHF-2(1Y+1V)</name>
        <name>FGF13YV</name>
        <sequence type="described" ref="VSP_043461"/>
    </isoform>
    <isoform>
        <id>Q92913-4</id>
        <name>4</name>
        <name evidence="18">hFHF-2(1Z+1Y)</name>
        <name>FGF13V</name>
        <sequence type="described" ref="VSP_043460"/>
    </isoform>
    <isoform>
        <id>Q92913-5</id>
        <name>5</name>
        <name evidence="18">hFHF-2(1X+1W+1V)</name>
        <name>FGF13Y</name>
        <sequence type="described" ref="VSP_044129"/>
    </isoform>
</comment>
<comment type="tissue specificity">
    <text evidence="15">Ubiquitously expressed. Predominantly expressed in the nervous system.</text>
</comment>
<comment type="PTM">
    <text evidence="1">May be phosphorylated.</text>
</comment>
<comment type="disease" evidence="11 13">
    <disease id="DI-06025">
        <name>Developmental and epileptic encephalopathy 90</name>
        <acronym>DEE90</acronym>
        <description>A form of epileptic encephalopathy, a heterogeneous group of early-onset epilepsies characterized by refractory seizures, neurodevelopmental impairment, and poor prognosis. Development is normal prior to seizure onset, after which cognitive and motor delays become apparent. DEE90 is an X-linked form characterized by onset of refractory seizures in the first days or months of life.</description>
        <dbReference type="MIM" id="301058"/>
    </disease>
    <text>The disease is caused by variants affecting the gene represented in this entry.</text>
</comment>
<comment type="disease" evidence="12">
    <disease id="DI-06576">
        <name>Intellectual developmental disorder, X-linked 110</name>
        <acronym>XLID110</acronym>
        <description>A disorder characterized by significantly below average general intellectual functioning associated with impairments in adaptive behavior and manifested during the developmental period.</description>
        <dbReference type="MIM" id="301095"/>
    </disease>
    <text>The disease is caused by variants affecting the gene represented in this entry.</text>
</comment>
<comment type="similarity">
    <text evidence="21">Belongs to the heparin-binding growth factors family.</text>
</comment>